<sequence>MLRYAVIFFIIALIAALFGFGGIAAGAAGIAKILFMIFVVLFVVSLFWGLVAGRG</sequence>
<protein>
    <recommendedName>
        <fullName evidence="1">UPF0391 membrane protein RSp1666</fullName>
    </recommendedName>
</protein>
<dbReference type="EMBL" id="AL646053">
    <property type="protein sequence ID" value="CAD18817.1"/>
    <property type="status" value="ALT_INIT"/>
    <property type="molecule type" value="Genomic_DNA"/>
</dbReference>
<dbReference type="RefSeq" id="WP_016722274.1">
    <property type="nucleotide sequence ID" value="NC_003296.1"/>
</dbReference>
<dbReference type="STRING" id="267608.RSp1666"/>
<dbReference type="EnsemblBacteria" id="CAD18817">
    <property type="protein sequence ID" value="CAD18817"/>
    <property type="gene ID" value="RSp1666"/>
</dbReference>
<dbReference type="KEGG" id="rso:RSp1666"/>
<dbReference type="eggNOG" id="COG5487">
    <property type="taxonomic scope" value="Bacteria"/>
</dbReference>
<dbReference type="HOGENOM" id="CLU_187346_0_1_4"/>
<dbReference type="Proteomes" id="UP000001436">
    <property type="component" value="Plasmid megaplasmid Rsp"/>
</dbReference>
<dbReference type="GO" id="GO:0005886">
    <property type="term" value="C:plasma membrane"/>
    <property type="evidence" value="ECO:0007669"/>
    <property type="project" value="UniProtKB-SubCell"/>
</dbReference>
<dbReference type="HAMAP" id="MF_01361">
    <property type="entry name" value="UPF0391"/>
    <property type="match status" value="1"/>
</dbReference>
<dbReference type="InterPro" id="IPR009760">
    <property type="entry name" value="DUF1328"/>
</dbReference>
<dbReference type="NCBIfam" id="NF010226">
    <property type="entry name" value="PRK13682.1-1"/>
    <property type="match status" value="1"/>
</dbReference>
<dbReference type="NCBIfam" id="NF010229">
    <property type="entry name" value="PRK13682.1-4"/>
    <property type="match status" value="1"/>
</dbReference>
<dbReference type="Pfam" id="PF07043">
    <property type="entry name" value="DUF1328"/>
    <property type="match status" value="1"/>
</dbReference>
<dbReference type="PIRSF" id="PIRSF036466">
    <property type="entry name" value="UCP036466"/>
    <property type="match status" value="1"/>
</dbReference>
<evidence type="ECO:0000255" key="1">
    <source>
        <dbReference type="HAMAP-Rule" id="MF_01361"/>
    </source>
</evidence>
<evidence type="ECO:0000305" key="2"/>
<keyword id="KW-1003">Cell membrane</keyword>
<keyword id="KW-0472">Membrane</keyword>
<keyword id="KW-0614">Plasmid</keyword>
<keyword id="KW-1185">Reference proteome</keyword>
<keyword id="KW-0812">Transmembrane</keyword>
<keyword id="KW-1133">Transmembrane helix</keyword>
<name>Y5166_RALN1</name>
<reference key="1">
    <citation type="journal article" date="2002" name="Nature">
        <title>Genome sequence of the plant pathogen Ralstonia solanacearum.</title>
        <authorList>
            <person name="Salanoubat M."/>
            <person name="Genin S."/>
            <person name="Artiguenave F."/>
            <person name="Gouzy J."/>
            <person name="Mangenot S."/>
            <person name="Arlat M."/>
            <person name="Billault A."/>
            <person name="Brottier P."/>
            <person name="Camus J.-C."/>
            <person name="Cattolico L."/>
            <person name="Chandler M."/>
            <person name="Choisne N."/>
            <person name="Claudel-Renard C."/>
            <person name="Cunnac S."/>
            <person name="Demange N."/>
            <person name="Gaspin C."/>
            <person name="Lavie M."/>
            <person name="Moisan A."/>
            <person name="Robert C."/>
            <person name="Saurin W."/>
            <person name="Schiex T."/>
            <person name="Siguier P."/>
            <person name="Thebault P."/>
            <person name="Whalen M."/>
            <person name="Wincker P."/>
            <person name="Levy M."/>
            <person name="Weissenbach J."/>
            <person name="Boucher C.A."/>
        </authorList>
    </citation>
    <scope>NUCLEOTIDE SEQUENCE [LARGE SCALE GENOMIC DNA]</scope>
    <source>
        <strain>ATCC BAA-1114 / GMI1000</strain>
    </source>
</reference>
<geneLocation type="plasmid">
    <name>megaplasmid Rsp</name>
</geneLocation>
<feature type="chain" id="PRO_0000256768" description="UPF0391 membrane protein RSp1666">
    <location>
        <begin position="1"/>
        <end position="55"/>
    </location>
</feature>
<feature type="transmembrane region" description="Helical" evidence="1">
    <location>
        <begin position="5"/>
        <end position="25"/>
    </location>
</feature>
<feature type="transmembrane region" description="Helical" evidence="1">
    <location>
        <begin position="33"/>
        <end position="53"/>
    </location>
</feature>
<comment type="subcellular location">
    <subcellularLocation>
        <location evidence="1">Cell membrane</location>
        <topology evidence="1">Multi-pass membrane protein</topology>
    </subcellularLocation>
</comment>
<comment type="similarity">
    <text evidence="1">Belongs to the UPF0391 family.</text>
</comment>
<comment type="sequence caution" evidence="2">
    <conflict type="erroneous initiation">
        <sequence resource="EMBL-CDS" id="CAD18817"/>
    </conflict>
    <text>Extended N-terminus.</text>
</comment>
<gene>
    <name type="ordered locus">RSp1666</name>
</gene>
<accession>Q8XPH4</accession>
<organism>
    <name type="scientific">Ralstonia nicotianae (strain ATCC BAA-1114 / GMI1000)</name>
    <name type="common">Ralstonia solanacearum</name>
    <dbReference type="NCBI Taxonomy" id="267608"/>
    <lineage>
        <taxon>Bacteria</taxon>
        <taxon>Pseudomonadati</taxon>
        <taxon>Pseudomonadota</taxon>
        <taxon>Betaproteobacteria</taxon>
        <taxon>Burkholderiales</taxon>
        <taxon>Burkholderiaceae</taxon>
        <taxon>Ralstonia</taxon>
        <taxon>Ralstonia solanacearum species complex</taxon>
    </lineage>
</organism>
<proteinExistence type="inferred from homology"/>